<name>TYSY_SHIFL</name>
<sequence length="264" mass="30466">MKQYLELMQKVLDEGTQKNDRTGTGTLSIFGHQMRFNLQDGFPLVTTKRCHLRSIIHELLWFLQGDTNIAYLHENNVTIWDEWADENGDLGPVYGKQWRAWPTPDGRHIDQITTVLNQLKNDPDSRRIIVSAWNVGELDKMALAPCHAFFQFYVADGKLSCQLYQRSCDVFLGLPFNIASYALLVHMMAQQCDLEVGDFVWTGGDTHLYSNHMDQTHLQLSREPRPLPKLIIKRKPESIFDYRFEDFEIEGYDPHPGVKAPVAI</sequence>
<gene>
    <name evidence="1" type="primary">thyA</name>
    <name type="ordered locus">SF2837</name>
    <name type="ordered locus">S3035</name>
</gene>
<accession>P48464</accession>
<evidence type="ECO:0000255" key="1">
    <source>
        <dbReference type="HAMAP-Rule" id="MF_00008"/>
    </source>
</evidence>
<evidence type="ECO:0000305" key="2"/>
<keyword id="KW-0963">Cytoplasm</keyword>
<keyword id="KW-0489">Methyltransferase</keyword>
<keyword id="KW-0545">Nucleotide biosynthesis</keyword>
<keyword id="KW-1185">Reference proteome</keyword>
<keyword id="KW-0808">Transferase</keyword>
<organism>
    <name type="scientific">Shigella flexneri</name>
    <dbReference type="NCBI Taxonomy" id="623"/>
    <lineage>
        <taxon>Bacteria</taxon>
        <taxon>Pseudomonadati</taxon>
        <taxon>Pseudomonadota</taxon>
        <taxon>Gammaproteobacteria</taxon>
        <taxon>Enterobacterales</taxon>
        <taxon>Enterobacteriaceae</taxon>
        <taxon>Shigella</taxon>
    </lineage>
</organism>
<dbReference type="EC" id="2.1.1.45" evidence="1"/>
<dbReference type="EMBL" id="S75211">
    <property type="protein sequence ID" value="AAP31579.1"/>
    <property type="molecule type" value="mRNA"/>
</dbReference>
<dbReference type="EMBL" id="AE005674">
    <property type="protein sequence ID" value="AAN44323.1"/>
    <property type="molecule type" value="Genomic_DNA"/>
</dbReference>
<dbReference type="EMBL" id="AE014073">
    <property type="protein sequence ID" value="AAP18149.1"/>
    <property type="molecule type" value="Genomic_DNA"/>
</dbReference>
<dbReference type="RefSeq" id="NP_708616.1">
    <property type="nucleotide sequence ID" value="NC_004337.2"/>
</dbReference>
<dbReference type="RefSeq" id="WP_000816233.1">
    <property type="nucleotide sequence ID" value="NZ_WPGW01000008.1"/>
</dbReference>
<dbReference type="SMR" id="P48464"/>
<dbReference type="STRING" id="198214.SF2837"/>
<dbReference type="PaxDb" id="198214-SF2837"/>
<dbReference type="GeneID" id="1025814"/>
<dbReference type="KEGG" id="sfl:SF2837"/>
<dbReference type="KEGG" id="sfx:S3035"/>
<dbReference type="PATRIC" id="fig|198214.7.peg.3377"/>
<dbReference type="HOGENOM" id="CLU_021669_0_0_6"/>
<dbReference type="UniPathway" id="UPA00575"/>
<dbReference type="Proteomes" id="UP000001006">
    <property type="component" value="Chromosome"/>
</dbReference>
<dbReference type="Proteomes" id="UP000002673">
    <property type="component" value="Chromosome"/>
</dbReference>
<dbReference type="GO" id="GO:0005829">
    <property type="term" value="C:cytosol"/>
    <property type="evidence" value="ECO:0007669"/>
    <property type="project" value="TreeGrafter"/>
</dbReference>
<dbReference type="GO" id="GO:0004799">
    <property type="term" value="F:thymidylate synthase activity"/>
    <property type="evidence" value="ECO:0007669"/>
    <property type="project" value="UniProtKB-UniRule"/>
</dbReference>
<dbReference type="GO" id="GO:0006231">
    <property type="term" value="P:dTMP biosynthetic process"/>
    <property type="evidence" value="ECO:0007669"/>
    <property type="project" value="UniProtKB-UniRule"/>
</dbReference>
<dbReference type="GO" id="GO:0006235">
    <property type="term" value="P:dTTP biosynthetic process"/>
    <property type="evidence" value="ECO:0007669"/>
    <property type="project" value="UniProtKB-UniRule"/>
</dbReference>
<dbReference type="GO" id="GO:0032259">
    <property type="term" value="P:methylation"/>
    <property type="evidence" value="ECO:0007669"/>
    <property type="project" value="UniProtKB-KW"/>
</dbReference>
<dbReference type="CDD" id="cd00351">
    <property type="entry name" value="TS_Pyrimidine_HMase"/>
    <property type="match status" value="1"/>
</dbReference>
<dbReference type="FunFam" id="3.30.572.10:FF:000001">
    <property type="entry name" value="Thymidylate synthase"/>
    <property type="match status" value="1"/>
</dbReference>
<dbReference type="Gene3D" id="3.30.572.10">
    <property type="entry name" value="Thymidylate synthase/dCMP hydroxymethylase domain"/>
    <property type="match status" value="1"/>
</dbReference>
<dbReference type="HAMAP" id="MF_00008">
    <property type="entry name" value="Thymidy_synth_bact"/>
    <property type="match status" value="1"/>
</dbReference>
<dbReference type="InterPro" id="IPR045097">
    <property type="entry name" value="Thymidate_synth/dCMP_Mease"/>
</dbReference>
<dbReference type="InterPro" id="IPR023451">
    <property type="entry name" value="Thymidate_synth/dCMP_Mease_dom"/>
</dbReference>
<dbReference type="InterPro" id="IPR036926">
    <property type="entry name" value="Thymidate_synth/dCMP_Mease_sf"/>
</dbReference>
<dbReference type="InterPro" id="IPR000398">
    <property type="entry name" value="Thymidylate_synthase"/>
</dbReference>
<dbReference type="InterPro" id="IPR020940">
    <property type="entry name" value="Thymidylate_synthase_AS"/>
</dbReference>
<dbReference type="NCBIfam" id="NF002497">
    <property type="entry name" value="PRK01827.1-3"/>
    <property type="match status" value="1"/>
</dbReference>
<dbReference type="NCBIfam" id="NF002499">
    <property type="entry name" value="PRK01827.1-5"/>
    <property type="match status" value="1"/>
</dbReference>
<dbReference type="NCBIfam" id="TIGR03284">
    <property type="entry name" value="thym_sym"/>
    <property type="match status" value="2"/>
</dbReference>
<dbReference type="PANTHER" id="PTHR11548:SF9">
    <property type="entry name" value="THYMIDYLATE SYNTHASE"/>
    <property type="match status" value="1"/>
</dbReference>
<dbReference type="PANTHER" id="PTHR11548">
    <property type="entry name" value="THYMIDYLATE SYNTHASE 1"/>
    <property type="match status" value="1"/>
</dbReference>
<dbReference type="Pfam" id="PF00303">
    <property type="entry name" value="Thymidylat_synt"/>
    <property type="match status" value="1"/>
</dbReference>
<dbReference type="PRINTS" id="PR00108">
    <property type="entry name" value="THYMDSNTHASE"/>
</dbReference>
<dbReference type="SUPFAM" id="SSF55831">
    <property type="entry name" value="Thymidylate synthase/dCMP hydroxymethylase"/>
    <property type="match status" value="1"/>
</dbReference>
<dbReference type="PROSITE" id="PS00091">
    <property type="entry name" value="THYMIDYLATE_SYNTHASE"/>
    <property type="match status" value="1"/>
</dbReference>
<feature type="chain" id="PRO_0000141016" description="Thymidylate synthase">
    <location>
        <begin position="1"/>
        <end position="264"/>
    </location>
</feature>
<feature type="active site" description="Nucleophile" evidence="1">
    <location>
        <position position="146"/>
    </location>
</feature>
<feature type="binding site" description="in other chain" evidence="1">
    <location>
        <position position="21"/>
    </location>
    <ligand>
        <name>dUMP</name>
        <dbReference type="ChEBI" id="CHEBI:246422"/>
        <note>ligand shared between dimeric partners</note>
    </ligand>
</feature>
<feature type="binding site" evidence="1">
    <location>
        <position position="51"/>
    </location>
    <ligand>
        <name>(6R)-5,10-methylene-5,6,7,8-tetrahydrofolate</name>
        <dbReference type="ChEBI" id="CHEBI:15636"/>
    </ligand>
</feature>
<feature type="binding site" evidence="1">
    <location>
        <begin position="126"/>
        <end position="127"/>
    </location>
    <ligand>
        <name>dUMP</name>
        <dbReference type="ChEBI" id="CHEBI:246422"/>
        <note>ligand shared between dimeric partners</note>
    </ligand>
</feature>
<feature type="binding site" description="in other chain" evidence="1">
    <location>
        <begin position="166"/>
        <end position="169"/>
    </location>
    <ligand>
        <name>dUMP</name>
        <dbReference type="ChEBI" id="CHEBI:246422"/>
        <note>ligand shared between dimeric partners</note>
    </ligand>
</feature>
<feature type="binding site" evidence="1">
    <location>
        <position position="169"/>
    </location>
    <ligand>
        <name>(6R)-5,10-methylene-5,6,7,8-tetrahydrofolate</name>
        <dbReference type="ChEBI" id="CHEBI:15636"/>
    </ligand>
</feature>
<feature type="binding site" description="in other chain" evidence="1">
    <location>
        <position position="177"/>
    </location>
    <ligand>
        <name>dUMP</name>
        <dbReference type="ChEBI" id="CHEBI:246422"/>
        <note>ligand shared between dimeric partners</note>
    </ligand>
</feature>
<feature type="binding site" description="in other chain" evidence="1">
    <location>
        <begin position="207"/>
        <end position="209"/>
    </location>
    <ligand>
        <name>dUMP</name>
        <dbReference type="ChEBI" id="CHEBI:246422"/>
        <note>ligand shared between dimeric partners</note>
    </ligand>
</feature>
<feature type="binding site" evidence="1">
    <location>
        <position position="263"/>
    </location>
    <ligand>
        <name>(6R)-5,10-methylene-5,6,7,8-tetrahydrofolate</name>
        <dbReference type="ChEBI" id="CHEBI:15636"/>
    </ligand>
</feature>
<feature type="sequence conflict" description="In Ref. 1; AAP31579." evidence="2" ref="1">
    <original>A</original>
    <variation>G</variation>
    <location>
        <position position="70"/>
    </location>
</feature>
<feature type="sequence conflict" description="In Ref. 1; AAP31579." evidence="2" ref="1">
    <original>E</original>
    <variation>D</variation>
    <location>
        <position position="82"/>
    </location>
</feature>
<feature type="sequence conflict" description="In Ref. 1; AAP31579." evidence="2" ref="1">
    <original>Y</original>
    <variation>F</variation>
    <location>
        <position position="94"/>
    </location>
</feature>
<feature type="sequence conflict" description="In Ref. 1; AAP31579." evidence="2" ref="1">
    <original>A</original>
    <variation>T</variation>
    <location>
        <position position="182"/>
    </location>
</feature>
<feature type="sequence conflict" description="In Ref. 1; AAP31579." evidence="2" ref="1">
    <original>S</original>
    <variation>T</variation>
    <location>
        <position position="210"/>
    </location>
</feature>
<feature type="sequence conflict" description="In Ref. 1; AAP31579." evidence="2" ref="1">
    <original>V</original>
    <variation>I</variation>
    <location>
        <position position="258"/>
    </location>
</feature>
<reference key="1">
    <citation type="journal article" date="1994" name="Microbiol. Immunol.">
        <title>Molecular cloning of the wild-type and mutant thyA gene from Shigella flexneri Y.</title>
        <authorList>
            <person name="Nur-E-Kamal M.S."/>
            <person name="Al-Mamun A.A."/>
            <person name="Ahmed Z.U."/>
        </authorList>
    </citation>
    <scope>NUCLEOTIDE SEQUENCE [GENOMIC DNA]</scope>
</reference>
<reference key="2">
    <citation type="journal article" date="2002" name="Nucleic Acids Res.">
        <title>Genome sequence of Shigella flexneri 2a: insights into pathogenicity through comparison with genomes of Escherichia coli K12 and O157.</title>
        <authorList>
            <person name="Jin Q."/>
            <person name="Yuan Z."/>
            <person name="Xu J."/>
            <person name="Wang Y."/>
            <person name="Shen Y."/>
            <person name="Lu W."/>
            <person name="Wang J."/>
            <person name="Liu H."/>
            <person name="Yang J."/>
            <person name="Yang F."/>
            <person name="Zhang X."/>
            <person name="Zhang J."/>
            <person name="Yang G."/>
            <person name="Wu H."/>
            <person name="Qu D."/>
            <person name="Dong J."/>
            <person name="Sun L."/>
            <person name="Xue Y."/>
            <person name="Zhao A."/>
            <person name="Gao Y."/>
            <person name="Zhu J."/>
            <person name="Kan B."/>
            <person name="Ding K."/>
            <person name="Chen S."/>
            <person name="Cheng H."/>
            <person name="Yao Z."/>
            <person name="He B."/>
            <person name="Chen R."/>
            <person name="Ma D."/>
            <person name="Qiang B."/>
            <person name="Wen Y."/>
            <person name="Hou Y."/>
            <person name="Yu J."/>
        </authorList>
    </citation>
    <scope>NUCLEOTIDE SEQUENCE [LARGE SCALE GENOMIC DNA]</scope>
    <source>
        <strain>301 / Serotype 2a</strain>
    </source>
</reference>
<reference key="3">
    <citation type="journal article" date="2003" name="Infect. Immun.">
        <title>Complete genome sequence and comparative genomics of Shigella flexneri serotype 2a strain 2457T.</title>
        <authorList>
            <person name="Wei J."/>
            <person name="Goldberg M.B."/>
            <person name="Burland V."/>
            <person name="Venkatesan M.M."/>
            <person name="Deng W."/>
            <person name="Fournier G."/>
            <person name="Mayhew G.F."/>
            <person name="Plunkett G. III"/>
            <person name="Rose D.J."/>
            <person name="Darling A."/>
            <person name="Mau B."/>
            <person name="Perna N.T."/>
            <person name="Payne S.M."/>
            <person name="Runyen-Janecky L.J."/>
            <person name="Zhou S."/>
            <person name="Schwartz D.C."/>
            <person name="Blattner F.R."/>
        </authorList>
    </citation>
    <scope>NUCLEOTIDE SEQUENCE [LARGE SCALE GENOMIC DNA]</scope>
    <source>
        <strain>ATCC 700930 / 2457T / Serotype 2a</strain>
    </source>
</reference>
<comment type="function">
    <text evidence="1">Catalyzes the reductive methylation of 2'-deoxyuridine-5'-monophosphate (dUMP) to 2'-deoxythymidine-5'-monophosphate (dTMP) while utilizing 5,10-methylenetetrahydrofolate (mTHF) as the methyl donor and reductant in the reaction, yielding dihydrofolate (DHF) as a by-product. This enzymatic reaction provides an intracellular de novo source of dTMP, an essential precursor for DNA biosynthesis.</text>
</comment>
<comment type="catalytic activity">
    <reaction evidence="1">
        <text>dUMP + (6R)-5,10-methylene-5,6,7,8-tetrahydrofolate = 7,8-dihydrofolate + dTMP</text>
        <dbReference type="Rhea" id="RHEA:12104"/>
        <dbReference type="ChEBI" id="CHEBI:15636"/>
        <dbReference type="ChEBI" id="CHEBI:57451"/>
        <dbReference type="ChEBI" id="CHEBI:63528"/>
        <dbReference type="ChEBI" id="CHEBI:246422"/>
        <dbReference type="EC" id="2.1.1.45"/>
    </reaction>
</comment>
<comment type="pathway">
    <text evidence="1">Pyrimidine metabolism; dTTP biosynthesis.</text>
</comment>
<comment type="subunit">
    <text evidence="1">Homodimer.</text>
</comment>
<comment type="subcellular location">
    <subcellularLocation>
        <location evidence="1">Cytoplasm</location>
    </subcellularLocation>
</comment>
<comment type="similarity">
    <text evidence="1">Belongs to the thymidylate synthase family. Bacterial-type ThyA subfamily.</text>
</comment>
<protein>
    <recommendedName>
        <fullName evidence="1">Thymidylate synthase</fullName>
        <shortName evidence="1">TS</shortName>
        <shortName evidence="1">TSase</shortName>
        <ecNumber evidence="1">2.1.1.45</ecNumber>
    </recommendedName>
</protein>
<proteinExistence type="evidence at transcript level"/>